<evidence type="ECO:0000255" key="1">
    <source>
        <dbReference type="HAMAP-Rule" id="MF_00480"/>
    </source>
</evidence>
<evidence type="ECO:0000305" key="2"/>
<proteinExistence type="inferred from homology"/>
<feature type="chain" id="PRO_1000014288" description="Small ribosomal subunit protein uS7">
    <location>
        <begin position="1"/>
        <end position="156"/>
    </location>
</feature>
<protein>
    <recommendedName>
        <fullName evidence="1">Small ribosomal subunit protein uS7</fullName>
    </recommendedName>
    <alternativeName>
        <fullName evidence="2">30S ribosomal protein S7</fullName>
    </alternativeName>
</protein>
<name>RS7_SHESM</name>
<keyword id="KW-0687">Ribonucleoprotein</keyword>
<keyword id="KW-0689">Ribosomal protein</keyword>
<keyword id="KW-0694">RNA-binding</keyword>
<keyword id="KW-0699">rRNA-binding</keyword>
<keyword id="KW-0820">tRNA-binding</keyword>
<accession>Q0HNU1</accession>
<organism>
    <name type="scientific">Shewanella sp. (strain MR-4)</name>
    <dbReference type="NCBI Taxonomy" id="60480"/>
    <lineage>
        <taxon>Bacteria</taxon>
        <taxon>Pseudomonadati</taxon>
        <taxon>Pseudomonadota</taxon>
        <taxon>Gammaproteobacteria</taxon>
        <taxon>Alteromonadales</taxon>
        <taxon>Shewanellaceae</taxon>
        <taxon>Shewanella</taxon>
    </lineage>
</organism>
<dbReference type="EMBL" id="CP000446">
    <property type="protein sequence ID" value="ABI37276.1"/>
    <property type="molecule type" value="Genomic_DNA"/>
</dbReference>
<dbReference type="RefSeq" id="WP_011070613.1">
    <property type="nucleotide sequence ID" value="NC_008321.1"/>
</dbReference>
<dbReference type="SMR" id="Q0HNU1"/>
<dbReference type="GeneID" id="75190623"/>
<dbReference type="KEGG" id="she:Shewmr4_0195"/>
<dbReference type="HOGENOM" id="CLU_072226_1_1_6"/>
<dbReference type="GO" id="GO:0015935">
    <property type="term" value="C:small ribosomal subunit"/>
    <property type="evidence" value="ECO:0007669"/>
    <property type="project" value="InterPro"/>
</dbReference>
<dbReference type="GO" id="GO:0019843">
    <property type="term" value="F:rRNA binding"/>
    <property type="evidence" value="ECO:0007669"/>
    <property type="project" value="UniProtKB-UniRule"/>
</dbReference>
<dbReference type="GO" id="GO:0003735">
    <property type="term" value="F:structural constituent of ribosome"/>
    <property type="evidence" value="ECO:0007669"/>
    <property type="project" value="InterPro"/>
</dbReference>
<dbReference type="GO" id="GO:0000049">
    <property type="term" value="F:tRNA binding"/>
    <property type="evidence" value="ECO:0007669"/>
    <property type="project" value="UniProtKB-UniRule"/>
</dbReference>
<dbReference type="GO" id="GO:0006412">
    <property type="term" value="P:translation"/>
    <property type="evidence" value="ECO:0007669"/>
    <property type="project" value="UniProtKB-UniRule"/>
</dbReference>
<dbReference type="CDD" id="cd14869">
    <property type="entry name" value="uS7_Bacteria"/>
    <property type="match status" value="1"/>
</dbReference>
<dbReference type="FunFam" id="1.10.455.10:FF:000001">
    <property type="entry name" value="30S ribosomal protein S7"/>
    <property type="match status" value="1"/>
</dbReference>
<dbReference type="Gene3D" id="1.10.455.10">
    <property type="entry name" value="Ribosomal protein S7 domain"/>
    <property type="match status" value="1"/>
</dbReference>
<dbReference type="HAMAP" id="MF_00480_B">
    <property type="entry name" value="Ribosomal_uS7_B"/>
    <property type="match status" value="1"/>
</dbReference>
<dbReference type="InterPro" id="IPR000235">
    <property type="entry name" value="Ribosomal_uS7"/>
</dbReference>
<dbReference type="InterPro" id="IPR005717">
    <property type="entry name" value="Ribosomal_uS7_bac/org-type"/>
</dbReference>
<dbReference type="InterPro" id="IPR020606">
    <property type="entry name" value="Ribosomal_uS7_CS"/>
</dbReference>
<dbReference type="InterPro" id="IPR023798">
    <property type="entry name" value="Ribosomal_uS7_dom"/>
</dbReference>
<dbReference type="InterPro" id="IPR036823">
    <property type="entry name" value="Ribosomal_uS7_dom_sf"/>
</dbReference>
<dbReference type="NCBIfam" id="TIGR01029">
    <property type="entry name" value="rpsG_bact"/>
    <property type="match status" value="1"/>
</dbReference>
<dbReference type="PANTHER" id="PTHR11205">
    <property type="entry name" value="RIBOSOMAL PROTEIN S7"/>
    <property type="match status" value="1"/>
</dbReference>
<dbReference type="Pfam" id="PF00177">
    <property type="entry name" value="Ribosomal_S7"/>
    <property type="match status" value="1"/>
</dbReference>
<dbReference type="PIRSF" id="PIRSF002122">
    <property type="entry name" value="RPS7p_RPS7a_RPS5e_RPS7o"/>
    <property type="match status" value="1"/>
</dbReference>
<dbReference type="SUPFAM" id="SSF47973">
    <property type="entry name" value="Ribosomal protein S7"/>
    <property type="match status" value="1"/>
</dbReference>
<dbReference type="PROSITE" id="PS00052">
    <property type="entry name" value="RIBOSOMAL_S7"/>
    <property type="match status" value="1"/>
</dbReference>
<gene>
    <name evidence="1" type="primary">rpsG</name>
    <name type="ordered locus">Shewmr4_0195</name>
</gene>
<reference key="1">
    <citation type="submission" date="2006-08" db="EMBL/GenBank/DDBJ databases">
        <title>Complete sequence of Shewanella sp. MR-4.</title>
        <authorList>
            <consortium name="US DOE Joint Genome Institute"/>
            <person name="Copeland A."/>
            <person name="Lucas S."/>
            <person name="Lapidus A."/>
            <person name="Barry K."/>
            <person name="Detter J.C."/>
            <person name="Glavina del Rio T."/>
            <person name="Hammon N."/>
            <person name="Israni S."/>
            <person name="Dalin E."/>
            <person name="Tice H."/>
            <person name="Pitluck S."/>
            <person name="Kiss H."/>
            <person name="Brettin T."/>
            <person name="Bruce D."/>
            <person name="Han C."/>
            <person name="Tapia R."/>
            <person name="Gilna P."/>
            <person name="Schmutz J."/>
            <person name="Larimer F."/>
            <person name="Land M."/>
            <person name="Hauser L."/>
            <person name="Kyrpides N."/>
            <person name="Mikhailova N."/>
            <person name="Nealson K."/>
            <person name="Konstantinidis K."/>
            <person name="Klappenbach J."/>
            <person name="Tiedje J."/>
            <person name="Richardson P."/>
        </authorList>
    </citation>
    <scope>NUCLEOTIDE SEQUENCE [LARGE SCALE GENOMIC DNA]</scope>
    <source>
        <strain>MR-4</strain>
    </source>
</reference>
<sequence>MPRRRVVGQRKILPDPKFHSELLAKFINVIMQDGKKSTAEKIIYKALDVIAEKKGANHLDILEAALDNVRPSVEVKSRRVGGSTYQVPCEVRPVRRNALAMRWLVEAARKRGEKSMALRLAGEMLDASENKGTAVKKREDVHRMAEANKAFAHYRW</sequence>
<comment type="function">
    <text evidence="1">One of the primary rRNA binding proteins, it binds directly to 16S rRNA where it nucleates assembly of the head domain of the 30S subunit. Is located at the subunit interface close to the decoding center, probably blocks exit of the E-site tRNA.</text>
</comment>
<comment type="subunit">
    <text evidence="1">Part of the 30S ribosomal subunit. Contacts proteins S9 and S11.</text>
</comment>
<comment type="similarity">
    <text evidence="1">Belongs to the universal ribosomal protein uS7 family.</text>
</comment>